<protein>
    <recommendedName>
        <fullName>S-antigen protein</fullName>
    </recommendedName>
</protein>
<organism>
    <name type="scientific">Plasmodium falciparum (isolate NF7 / Ghana)</name>
    <dbReference type="NCBI Taxonomy" id="5842"/>
    <lineage>
        <taxon>Eukaryota</taxon>
        <taxon>Sar</taxon>
        <taxon>Alveolata</taxon>
        <taxon>Apicomplexa</taxon>
        <taxon>Aconoidasida</taxon>
        <taxon>Haemosporida</taxon>
        <taxon>Plasmodiidae</taxon>
        <taxon>Plasmodium</taxon>
        <taxon>Plasmodium (Laverania)</taxon>
    </lineage>
</organism>
<feature type="signal peptide">
    <location>
        <begin position="1"/>
        <end position="23"/>
    </location>
</feature>
<feature type="chain" id="PRO_0000024623" description="S-antigen protein">
    <location>
        <begin position="24"/>
        <end position="309"/>
    </location>
</feature>
<feature type="repeat" description="15-1">
    <location>
        <begin position="257"/>
        <end position="271"/>
    </location>
</feature>
<feature type="repeat" description="15-2">
    <location>
        <begin position="272"/>
        <end position="286"/>
    </location>
</feature>
<feature type="region of interest" description="Disordered" evidence="2">
    <location>
        <begin position="52"/>
        <end position="309"/>
    </location>
</feature>
<feature type="region of interest" description="20 X 8 AA approximate tandem repeats of A-[RL]-K-S-D-E-A-E">
    <location>
        <begin position="97"/>
        <end position="256"/>
    </location>
</feature>
<feature type="region of interest" description="2 X 15 AA tandem repeats of S-E-A-G-T-E-G-P-K-G-T-G-G-P-G">
    <location>
        <begin position="257"/>
        <end position="286"/>
    </location>
</feature>
<feature type="compositionally biased region" description="Acidic residues" evidence="2">
    <location>
        <begin position="60"/>
        <end position="86"/>
    </location>
</feature>
<feature type="compositionally biased region" description="Basic and acidic residues" evidence="2">
    <location>
        <begin position="93"/>
        <end position="259"/>
    </location>
</feature>
<feature type="compositionally biased region" description="Gly residues" evidence="2">
    <location>
        <begin position="263"/>
        <end position="289"/>
    </location>
</feature>
<reference key="1">
    <citation type="journal article" date="1985" name="Cell">
        <title>Conserved sequences flank variable tandem repeats in two S-antigen genes of Plasmodium falciparum.</title>
        <authorList>
            <person name="Cowman A.F."/>
            <person name="Saint R.B."/>
            <person name="Coppel R.L."/>
            <person name="Brown G.V."/>
            <person name="Anders R.F."/>
            <person name="Kemp D.J."/>
        </authorList>
    </citation>
    <scope>NUCLEOTIDE SEQUENCE [GENOMIC DNA]</scope>
</reference>
<evidence type="ECO:0000250" key="1">
    <source>
        <dbReference type="UniProtKB" id="P04927"/>
    </source>
</evidence>
<evidence type="ECO:0000256" key="2">
    <source>
        <dbReference type="SAM" id="MobiDB-lite"/>
    </source>
</evidence>
<evidence type="ECO:0000305" key="3"/>
<evidence type="ECO:0000305" key="4">
    <source>
    </source>
</evidence>
<comment type="function">
    <text evidence="3">S antigens are soluble heat-stable proteins present in the sera of some infected individuals.</text>
</comment>
<comment type="subcellular location">
    <subcellularLocation>
        <location evidence="1">Parasitophorous vacuole</location>
    </subcellularLocation>
    <text evidence="1">Localizes to the cell periphery in early schizonts and then to the parasitophorous vacuole in late schizonts. Following schizont rupture, the S-antigen is released in host sera.</text>
</comment>
<comment type="polymorphism">
    <text evidence="4">Diversity in S-antigen is mainly due to polymorphism in the repetitive regions.</text>
</comment>
<keyword id="KW-0461">Malaria</keyword>
<keyword id="KW-0677">Repeat</keyword>
<keyword id="KW-0732">Signal</keyword>
<accession>P04928</accession>
<name>SANT_PLAFN</name>
<proteinExistence type="inferred from homology"/>
<sequence>MNRILSVSFYLFFLYLYIYKTYGKVKNTDQEISNIYGTNYYLRNGFLNGKNGKGNKYEDLQEEGEGENDDEEHSNSEESDNDEENEIIVGQDEAPKSDEAEALKSDEAEALKSDEAEARKSDEAEALKSDEAEARKSDEAEALKSDEAEALKSDEAEARKSDEAEALKSDEAEALKSDEAEARKSDEAEARKSDEAEARKSDEAEARKSDEAEALKSDEAEARKSDEAEARKSDEAEALKSDEAEARKSDEAEARKSEAGTEGPKGTGGPGSEAGTEGPKGTGGPGSGGEHSHNKKKSKKSIMNMLILM</sequence>
<dbReference type="EMBL" id="M10130">
    <property type="protein sequence ID" value="AAA29758.1"/>
    <property type="molecule type" value="Genomic_DNA"/>
</dbReference>
<dbReference type="PIR" id="B22011">
    <property type="entry name" value="YAZQN7"/>
</dbReference>
<dbReference type="GO" id="GO:0020003">
    <property type="term" value="C:symbiont-containing vacuole"/>
    <property type="evidence" value="ECO:0007669"/>
    <property type="project" value="UniProtKB-SubCell"/>
</dbReference>
<dbReference type="InterPro" id="IPR008825">
    <property type="entry name" value="S-antigen"/>
</dbReference>
<dbReference type="Pfam" id="PF05756">
    <property type="entry name" value="S-antigen"/>
    <property type="match status" value="1"/>
</dbReference>